<comment type="similarity">
    <text evidence="2">Belongs to the UPF0758 family.</text>
</comment>
<evidence type="ECO:0000255" key="1">
    <source>
        <dbReference type="PROSITE-ProRule" id="PRU01182"/>
    </source>
</evidence>
<evidence type="ECO:0000305" key="2"/>
<sequence>MYSISFQEDSLLPRERLAKEGVEALSNQELLAILLRTGTRQASVFEIAQKVLNNLSSLTDLKKMTLQELQSLSGIGRVKAIELQAMIELGHRIHKHETLEMESILSSQKLAKKMQQELGDKKQEHLVALYLNTQNQIIHQQTIFIGSVTRSIAEPREILHYAIKHMATSLILVHNHPSGAVAPSQNDDHVTKLVKEACELMGIVLLDHLIVSHSNYFSYREKTDLI</sequence>
<feature type="chain" id="PRO_1000195308" description="UPF0758 protein SPN23F10090">
    <location>
        <begin position="1"/>
        <end position="226"/>
    </location>
</feature>
<feature type="domain" description="MPN" evidence="1">
    <location>
        <begin position="103"/>
        <end position="225"/>
    </location>
</feature>
<feature type="short sequence motif" description="JAMM motif" evidence="1">
    <location>
        <begin position="174"/>
        <end position="187"/>
    </location>
</feature>
<feature type="binding site" evidence="1">
    <location>
        <position position="174"/>
    </location>
    <ligand>
        <name>Zn(2+)</name>
        <dbReference type="ChEBI" id="CHEBI:29105"/>
        <note>catalytic</note>
    </ligand>
</feature>
<feature type="binding site" evidence="1">
    <location>
        <position position="176"/>
    </location>
    <ligand>
        <name>Zn(2+)</name>
        <dbReference type="ChEBI" id="CHEBI:29105"/>
        <note>catalytic</note>
    </ligand>
</feature>
<feature type="binding site" evidence="1">
    <location>
        <position position="187"/>
    </location>
    <ligand>
        <name>Zn(2+)</name>
        <dbReference type="ChEBI" id="CHEBI:29105"/>
        <note>catalytic</note>
    </ligand>
</feature>
<name>Y1009_STRPJ</name>
<organism>
    <name type="scientific">Streptococcus pneumoniae (strain ATCC 700669 / Spain 23F-1)</name>
    <dbReference type="NCBI Taxonomy" id="561276"/>
    <lineage>
        <taxon>Bacteria</taxon>
        <taxon>Bacillati</taxon>
        <taxon>Bacillota</taxon>
        <taxon>Bacilli</taxon>
        <taxon>Lactobacillales</taxon>
        <taxon>Streptococcaceae</taxon>
        <taxon>Streptococcus</taxon>
    </lineage>
</organism>
<dbReference type="EMBL" id="FM211187">
    <property type="protein sequence ID" value="CAR68832.1"/>
    <property type="molecule type" value="Genomic_DNA"/>
</dbReference>
<dbReference type="SMR" id="B8ZPT5"/>
<dbReference type="KEGG" id="sne:SPN23F10090"/>
<dbReference type="HOGENOM" id="CLU_073529_0_2_9"/>
<dbReference type="GO" id="GO:0046872">
    <property type="term" value="F:metal ion binding"/>
    <property type="evidence" value="ECO:0007669"/>
    <property type="project" value="UniProtKB-KW"/>
</dbReference>
<dbReference type="GO" id="GO:0008237">
    <property type="term" value="F:metallopeptidase activity"/>
    <property type="evidence" value="ECO:0007669"/>
    <property type="project" value="UniProtKB-KW"/>
</dbReference>
<dbReference type="GO" id="GO:0006508">
    <property type="term" value="P:proteolysis"/>
    <property type="evidence" value="ECO:0007669"/>
    <property type="project" value="UniProtKB-KW"/>
</dbReference>
<dbReference type="CDD" id="cd08071">
    <property type="entry name" value="MPN_DUF2466"/>
    <property type="match status" value="1"/>
</dbReference>
<dbReference type="Gene3D" id="3.40.140.10">
    <property type="entry name" value="Cytidine Deaminase, domain 2"/>
    <property type="match status" value="1"/>
</dbReference>
<dbReference type="InterPro" id="IPR037518">
    <property type="entry name" value="MPN"/>
</dbReference>
<dbReference type="InterPro" id="IPR025657">
    <property type="entry name" value="RadC_JAB"/>
</dbReference>
<dbReference type="InterPro" id="IPR010994">
    <property type="entry name" value="RuvA_2-like"/>
</dbReference>
<dbReference type="InterPro" id="IPR001405">
    <property type="entry name" value="UPF0758"/>
</dbReference>
<dbReference type="InterPro" id="IPR020891">
    <property type="entry name" value="UPF0758_CS"/>
</dbReference>
<dbReference type="InterPro" id="IPR046778">
    <property type="entry name" value="UPF0758_N"/>
</dbReference>
<dbReference type="NCBIfam" id="NF000642">
    <property type="entry name" value="PRK00024.1"/>
    <property type="match status" value="1"/>
</dbReference>
<dbReference type="NCBIfam" id="TIGR00608">
    <property type="entry name" value="radc"/>
    <property type="match status" value="1"/>
</dbReference>
<dbReference type="PANTHER" id="PTHR30471">
    <property type="entry name" value="DNA REPAIR PROTEIN RADC"/>
    <property type="match status" value="1"/>
</dbReference>
<dbReference type="PANTHER" id="PTHR30471:SF3">
    <property type="entry name" value="UPF0758 PROTEIN YEES-RELATED"/>
    <property type="match status" value="1"/>
</dbReference>
<dbReference type="Pfam" id="PF04002">
    <property type="entry name" value="RadC"/>
    <property type="match status" value="1"/>
</dbReference>
<dbReference type="Pfam" id="PF20582">
    <property type="entry name" value="UPF0758_N"/>
    <property type="match status" value="1"/>
</dbReference>
<dbReference type="SUPFAM" id="SSF47781">
    <property type="entry name" value="RuvA domain 2-like"/>
    <property type="match status" value="1"/>
</dbReference>
<dbReference type="PROSITE" id="PS50249">
    <property type="entry name" value="MPN"/>
    <property type="match status" value="1"/>
</dbReference>
<dbReference type="PROSITE" id="PS01302">
    <property type="entry name" value="UPF0758"/>
    <property type="match status" value="1"/>
</dbReference>
<gene>
    <name type="ordered locus">SPN23F10090</name>
</gene>
<proteinExistence type="inferred from homology"/>
<accession>B8ZPT5</accession>
<reference key="1">
    <citation type="journal article" date="2009" name="J. Bacteriol.">
        <title>Role of conjugative elements in the evolution of the multidrug-resistant pandemic clone Streptococcus pneumoniae Spain23F ST81.</title>
        <authorList>
            <person name="Croucher N.J."/>
            <person name="Walker D."/>
            <person name="Romero P."/>
            <person name="Lennard N."/>
            <person name="Paterson G.K."/>
            <person name="Bason N.C."/>
            <person name="Mitchell A.M."/>
            <person name="Quail M.A."/>
            <person name="Andrew P.W."/>
            <person name="Parkhill J."/>
            <person name="Bentley S.D."/>
            <person name="Mitchell T.J."/>
        </authorList>
    </citation>
    <scope>NUCLEOTIDE SEQUENCE [LARGE SCALE GENOMIC DNA]</scope>
    <source>
        <strain>ATCC 700669 / Spain 23F-1</strain>
    </source>
</reference>
<keyword id="KW-0378">Hydrolase</keyword>
<keyword id="KW-0479">Metal-binding</keyword>
<keyword id="KW-0482">Metalloprotease</keyword>
<keyword id="KW-0645">Protease</keyword>
<keyword id="KW-0862">Zinc</keyword>
<protein>
    <recommendedName>
        <fullName>UPF0758 protein SPN23F10090</fullName>
    </recommendedName>
</protein>